<organism>
    <name type="scientific">Monkeypox virus</name>
    <dbReference type="NCBI Taxonomy" id="10244"/>
    <lineage>
        <taxon>Viruses</taxon>
        <taxon>Varidnaviria</taxon>
        <taxon>Bamfordvirae</taxon>
        <taxon>Nucleocytoviricota</taxon>
        <taxon>Pokkesviricetes</taxon>
        <taxon>Chitovirales</taxon>
        <taxon>Poxviridae</taxon>
        <taxon>Chordopoxvirinae</taxon>
        <taxon>Orthopoxvirus</taxon>
    </lineage>
</organism>
<comment type="function">
    <text evidence="2">Acts with RNA polymerase to initiate transcription from late gene promoters.</text>
</comment>
<comment type="subunit">
    <text evidence="2">Interacts with the late transcription elongation factor VLTF-4/OPG110. Interacts with the late transcription factors VLTF-1.</text>
</comment>
<comment type="subcellular location">
    <subcellularLocation>
        <location evidence="1">Virion</location>
    </subcellularLocation>
    <text evidence="1">All the enzymes and other proteins required to synthesize early mRNAs are packaged within the virion core along with the DNA genome.</text>
</comment>
<comment type="similarity">
    <text evidence="3">Belongs to the orthopoxvirus mRNA-capping enzyme regulatory subunit family.</text>
</comment>
<name>MCES_MONPV</name>
<evidence type="ECO:0000250" key="1">
    <source>
        <dbReference type="UniProtKB" id="P04318"/>
    </source>
</evidence>
<evidence type="ECO:0000250" key="2">
    <source>
        <dbReference type="UniProtKB" id="P68319"/>
    </source>
</evidence>
<evidence type="ECO:0000305" key="3"/>
<sequence>MDEIVKNIREGTHVLLPFYETLPELNLSLGKSPLPSLEYGANYFLQISRVNDLNRMPTDMLKLFTHDIMLPESDLDKVYEILKINSVKYYGRSTRADAVVADLSARNKLFKRERDAIKSNNHLTENNLYISDYKMLTFDVFRPLFDFVNEKYCIIKLPTLFGRGVIDTMRIYCSLFKNVRLLKCVSDSWLKDSAIMVASDVYKKNLDLFMSHVKSVTKSSSWKDVNTVQFSILNDPVDTEFINKFLEFSNRVYEALYYVHSLLYSSMTSDSKSIENKHQRRLVKLLL</sequence>
<dbReference type="EMBL" id="MT903340">
    <property type="protein sequence ID" value="QNP12979.1"/>
    <property type="molecule type" value="Genomic_DNA"/>
</dbReference>
<dbReference type="RefSeq" id="NP_536536.1">
    <property type="nucleotide sequence ID" value="NC_003310.1"/>
</dbReference>
<dbReference type="RefSeq" id="YP_010377106.1">
    <property type="nucleotide sequence ID" value="NC_063383.1"/>
</dbReference>
<dbReference type="PDB" id="8JED">
    <property type="method" value="X-ray"/>
    <property type="resolution" value="2.16 A"/>
    <property type="chains" value="B=1-287"/>
</dbReference>
<dbReference type="PDB" id="8Y2Y">
    <property type="method" value="X-ray"/>
    <property type="resolution" value="2.20 A"/>
    <property type="chains" value="A=1-287"/>
</dbReference>
<dbReference type="PDB" id="8Y2Z">
    <property type="method" value="X-ray"/>
    <property type="resolution" value="3.94 A"/>
    <property type="chains" value="B=1-287"/>
</dbReference>
<dbReference type="PDB" id="8ZE4">
    <property type="method" value="X-ray"/>
    <property type="resolution" value="3.33 A"/>
    <property type="chains" value="B=1-287"/>
</dbReference>
<dbReference type="PDBsum" id="8JED"/>
<dbReference type="PDBsum" id="8Y2Y"/>
<dbReference type="PDBsum" id="8Y2Z"/>
<dbReference type="PDBsum" id="8ZE4"/>
<dbReference type="SMR" id="A0A7H0DN96"/>
<dbReference type="GeneID" id="72551519"/>
<dbReference type="GeneID" id="929059"/>
<dbReference type="KEGG" id="vg:929059"/>
<dbReference type="Proteomes" id="UP000516359">
    <property type="component" value="Genome"/>
</dbReference>
<dbReference type="GO" id="GO:0044423">
    <property type="term" value="C:virion component"/>
    <property type="evidence" value="ECO:0007669"/>
    <property type="project" value="UniProtKB-KW"/>
</dbReference>
<dbReference type="GO" id="GO:0004482">
    <property type="term" value="F:mRNA 5'-cap (guanine-N7-)-methyltransferase activity"/>
    <property type="evidence" value="ECO:0007669"/>
    <property type="project" value="InterPro"/>
</dbReference>
<dbReference type="GO" id="GO:0006353">
    <property type="term" value="P:DNA-templated transcription termination"/>
    <property type="evidence" value="ECO:0007669"/>
    <property type="project" value="UniProtKB-KW"/>
</dbReference>
<dbReference type="Gene3D" id="3.40.50.11680">
    <property type="entry name" value="Poxvirus mRNA capping enzyme, small subunit"/>
    <property type="match status" value="1"/>
</dbReference>
<dbReference type="InterPro" id="IPR005009">
    <property type="entry name" value="Poxvirus_mRNA-cap_ssu"/>
</dbReference>
<dbReference type="InterPro" id="IPR043096">
    <property type="entry name" value="Poxvirus_mRNA-cap_ssu_sf"/>
</dbReference>
<dbReference type="Pfam" id="PF03341">
    <property type="entry name" value="Pox_mRNA-cap"/>
    <property type="match status" value="1"/>
</dbReference>
<protein>
    <recommendedName>
        <fullName>mRNA-capping enzyme regulatory subunit OPG124</fullName>
    </recommendedName>
    <alternativeName>
        <fullName>Virus termination factor small subunit</fullName>
    </alternativeName>
    <alternativeName>
        <fullName>mRNA-capping enzyme 33 kDa subunit</fullName>
    </alternativeName>
    <alternativeName>
        <fullName>mRNA-capping enzyme D12 subunit</fullName>
    </alternativeName>
    <alternativeName>
        <fullName>mRNA-capping enzyme small subunit</fullName>
    </alternativeName>
</protein>
<reference key="1">
    <citation type="journal article" date="2022" name="J. Infect. Dis.">
        <title>Exportation of Monkeypox virus from the African continent.</title>
        <authorList>
            <person name="Mauldin M.R."/>
            <person name="McCollum A.M."/>
            <person name="Nakazawa Y.J."/>
            <person name="Mandra A."/>
            <person name="Whitehouse E.R."/>
            <person name="Davidson W."/>
            <person name="Zhao H."/>
            <person name="Gao J."/>
            <person name="Li Y."/>
            <person name="Doty J."/>
            <person name="Yinka-Ogunleye A."/>
            <person name="Akinpelu A."/>
            <person name="Aruna O."/>
            <person name="Naidoo D."/>
            <person name="Lewandowski K."/>
            <person name="Afrough B."/>
            <person name="Graham V."/>
            <person name="Aarons E."/>
            <person name="Hewson R."/>
            <person name="Vipond R."/>
            <person name="Dunning J."/>
            <person name="Chand M."/>
            <person name="Brown C."/>
            <person name="Cohen-Gihon I."/>
            <person name="Erez N."/>
            <person name="Shifman O."/>
            <person name="Israeli O."/>
            <person name="Sharon M."/>
            <person name="Schwartz E."/>
            <person name="Beth-Din A."/>
            <person name="Zvi A."/>
            <person name="Mak T.M."/>
            <person name="Ng Y.K."/>
            <person name="Cui L."/>
            <person name="Lin R.T.P."/>
            <person name="Olson V.A."/>
            <person name="Brooks T."/>
            <person name="Paran N."/>
            <person name="Ihekweazu C."/>
            <person name="Reynolds M.G."/>
        </authorList>
    </citation>
    <scope>NUCLEOTIDE SEQUENCE [LARGE SCALE GENOMIC DNA]</scope>
    <source>
        <strain>MPXV-M5312_HM12_Rivers</strain>
    </source>
</reference>
<organismHost>
    <name type="scientific">Cynomys gunnisoni</name>
    <name type="common">Gunnison's prairie dog</name>
    <name type="synonym">Spermophilus gunnisoni</name>
    <dbReference type="NCBI Taxonomy" id="45479"/>
</organismHost>
<organismHost>
    <name type="scientific">Cynomys leucurus</name>
    <name type="common">White-tailed prairie dog</name>
    <dbReference type="NCBI Taxonomy" id="99825"/>
</organismHost>
<organismHost>
    <name type="scientific">Cynomys ludovicianus</name>
    <name type="common">Black-tailed prairie dog</name>
    <dbReference type="NCBI Taxonomy" id="45480"/>
</organismHost>
<organismHost>
    <name type="scientific">Cynomys mexicanus</name>
    <name type="common">Mexican prairie dog</name>
    <dbReference type="NCBI Taxonomy" id="99826"/>
</organismHost>
<organismHost>
    <name type="scientific">Cynomys parvidens</name>
    <name type="common">Utah prairie dog</name>
    <dbReference type="NCBI Taxonomy" id="99827"/>
</organismHost>
<organismHost>
    <name type="scientific">Gliridae</name>
    <name type="common">dormice</name>
    <dbReference type="NCBI Taxonomy" id="30650"/>
</organismHost>
<organismHost>
    <name type="scientific">Heliosciurus ruwenzorii</name>
    <name type="common">Ruwenzori sun squirrel</name>
    <dbReference type="NCBI Taxonomy" id="226685"/>
</organismHost>
<organismHost>
    <name type="scientific">Homo sapiens</name>
    <name type="common">Human</name>
    <dbReference type="NCBI Taxonomy" id="9606"/>
</organismHost>
<organismHost>
    <name type="scientific">Mus musculus</name>
    <name type="common">Mouse</name>
    <dbReference type="NCBI Taxonomy" id="10090"/>
</organismHost>
<keyword id="KW-0002">3D-structure</keyword>
<keyword id="KW-0506">mRNA capping</keyword>
<keyword id="KW-0507">mRNA processing</keyword>
<keyword id="KW-1185">Reference proteome</keyword>
<keyword id="KW-0804">Transcription</keyword>
<keyword id="KW-0805">Transcription regulation</keyword>
<keyword id="KW-0806">Transcription termination</keyword>
<keyword id="KW-0946">Virion</keyword>
<feature type="chain" id="PRO_0000457513" description="mRNA-capping enzyme regulatory subunit OPG124">
    <location>
        <begin position="1"/>
        <end position="287"/>
    </location>
</feature>
<proteinExistence type="evidence at protein level"/>
<gene>
    <name type="primary">OPG124</name>
    <name type="ORF">MPXVgp109</name>
</gene>
<accession>A0A7H0DN96</accession>